<dbReference type="EMBL" id="U25840">
    <property type="protein sequence ID" value="AAB68155.1"/>
    <property type="molecule type" value="Genomic_DNA"/>
</dbReference>
<dbReference type="EMBL" id="BK006949">
    <property type="protein sequence ID" value="DAA11585.1"/>
    <property type="molecule type" value="Genomic_DNA"/>
</dbReference>
<dbReference type="PIR" id="S59827">
    <property type="entry name" value="S59827"/>
</dbReference>
<dbReference type="RefSeq" id="NP_015494.1">
    <property type="nucleotide sequence ID" value="NM_001184265.1"/>
</dbReference>
<dbReference type="PDB" id="5OQM">
    <property type="method" value="EM"/>
    <property type="resolution" value="5.80 A"/>
    <property type="chains" value="k=1-157"/>
</dbReference>
<dbReference type="PDB" id="7UI9">
    <property type="method" value="EM"/>
    <property type="resolution" value="3.30 A"/>
    <property type="chains" value="j=1-157"/>
</dbReference>
<dbReference type="PDB" id="7UIF">
    <property type="method" value="EM"/>
    <property type="resolution" value="4.60 A"/>
    <property type="chains" value="j=1-157"/>
</dbReference>
<dbReference type="PDB" id="7UIG">
    <property type="method" value="EM"/>
    <property type="resolution" value="4.30 A"/>
    <property type="chains" value="j=1-157"/>
</dbReference>
<dbReference type="PDB" id="7UIO">
    <property type="method" value="EM"/>
    <property type="resolution" value="3.30 A"/>
    <property type="chains" value="Aj/Bj=1-157"/>
</dbReference>
<dbReference type="PDB" id="8CEN">
    <property type="method" value="EM"/>
    <property type="resolution" value="3.00 A"/>
    <property type="chains" value="k=1-157"/>
</dbReference>
<dbReference type="PDB" id="8CEO">
    <property type="method" value="EM"/>
    <property type="resolution" value="3.60 A"/>
    <property type="chains" value="k=1-157"/>
</dbReference>
<dbReference type="PDBsum" id="5OQM"/>
<dbReference type="PDBsum" id="7UI9"/>
<dbReference type="PDBsum" id="7UIF"/>
<dbReference type="PDBsum" id="7UIG"/>
<dbReference type="PDBsum" id="7UIO"/>
<dbReference type="PDBsum" id="8CEN"/>
<dbReference type="PDBsum" id="8CEO"/>
<dbReference type="EMDB" id="EMD-26542"/>
<dbReference type="EMDB" id="EMD-26544"/>
<dbReference type="EMDB" id="EMD-26545"/>
<dbReference type="EMDB" id="EMD-26551"/>
<dbReference type="EMDB" id="EMD-2786"/>
<dbReference type="EMDB" id="EMD-3850"/>
<dbReference type="SMR" id="Q06213"/>
<dbReference type="BioGRID" id="36341">
    <property type="interactions" value="350"/>
</dbReference>
<dbReference type="ComplexPortal" id="CPX-3226">
    <property type="entry name" value="Core mediator complex"/>
</dbReference>
<dbReference type="DIP" id="DIP-3922N"/>
<dbReference type="FunCoup" id="Q06213">
    <property type="interactions" value="709"/>
</dbReference>
<dbReference type="IntAct" id="Q06213">
    <property type="interactions" value="29"/>
</dbReference>
<dbReference type="MINT" id="Q06213"/>
<dbReference type="STRING" id="4932.YPR168W"/>
<dbReference type="iPTMnet" id="Q06213"/>
<dbReference type="PaxDb" id="4932-YPR168W"/>
<dbReference type="PeptideAtlas" id="Q06213"/>
<dbReference type="EnsemblFungi" id="YPR168W_mRNA">
    <property type="protein sequence ID" value="YPR168W"/>
    <property type="gene ID" value="YPR168W"/>
</dbReference>
<dbReference type="GeneID" id="856297"/>
<dbReference type="KEGG" id="sce:YPR168W"/>
<dbReference type="AGR" id="SGD:S000006372"/>
<dbReference type="SGD" id="S000006372">
    <property type="gene designation" value="NUT2"/>
</dbReference>
<dbReference type="VEuPathDB" id="FungiDB:YPR168W"/>
<dbReference type="eggNOG" id="KOG3046">
    <property type="taxonomic scope" value="Eukaryota"/>
</dbReference>
<dbReference type="HOGENOM" id="CLU_096169_1_0_1"/>
<dbReference type="InParanoid" id="Q06213"/>
<dbReference type="OMA" id="QYQRAKM"/>
<dbReference type="OrthoDB" id="337270at2759"/>
<dbReference type="BioCyc" id="YEAST:G3O-34296-MONOMER"/>
<dbReference type="BioGRID-ORCS" id="856297">
    <property type="hits" value="10 hits in 10 CRISPR screens"/>
</dbReference>
<dbReference type="PRO" id="PR:Q06213"/>
<dbReference type="Proteomes" id="UP000002311">
    <property type="component" value="Chromosome XVI"/>
</dbReference>
<dbReference type="RNAct" id="Q06213">
    <property type="molecule type" value="protein"/>
</dbReference>
<dbReference type="GO" id="GO:0070847">
    <property type="term" value="C:core mediator complex"/>
    <property type="evidence" value="ECO:0000314"/>
    <property type="project" value="SGD"/>
</dbReference>
<dbReference type="GO" id="GO:0016592">
    <property type="term" value="C:mediator complex"/>
    <property type="evidence" value="ECO:0007669"/>
    <property type="project" value="InterPro"/>
</dbReference>
<dbReference type="GO" id="GO:0005634">
    <property type="term" value="C:nucleus"/>
    <property type="evidence" value="ECO:0000314"/>
    <property type="project" value="ComplexPortal"/>
</dbReference>
<dbReference type="GO" id="GO:0003712">
    <property type="term" value="F:transcription coregulator activity"/>
    <property type="evidence" value="ECO:0007669"/>
    <property type="project" value="InterPro"/>
</dbReference>
<dbReference type="GO" id="GO:0000122">
    <property type="term" value="P:negative regulation of transcription by RNA polymerase II"/>
    <property type="evidence" value="ECO:0000315"/>
    <property type="project" value="SGD"/>
</dbReference>
<dbReference type="GO" id="GO:0045944">
    <property type="term" value="P:positive regulation of transcription by RNA polymerase II"/>
    <property type="evidence" value="ECO:0000315"/>
    <property type="project" value="SGD"/>
</dbReference>
<dbReference type="GO" id="GO:0032968">
    <property type="term" value="P:positive regulation of transcription elongation by RNA polymerase II"/>
    <property type="evidence" value="ECO:0000314"/>
    <property type="project" value="ComplexPortal"/>
</dbReference>
<dbReference type="GO" id="GO:0060261">
    <property type="term" value="P:positive regulation of transcription initiation by RNA polymerase II"/>
    <property type="evidence" value="ECO:0000314"/>
    <property type="project" value="ComplexPortal"/>
</dbReference>
<dbReference type="GO" id="GO:0051123">
    <property type="term" value="P:RNA polymerase II preinitiation complex assembly"/>
    <property type="evidence" value="ECO:0000314"/>
    <property type="project" value="ComplexPortal"/>
</dbReference>
<dbReference type="InterPro" id="IPR019145">
    <property type="entry name" value="Mediator_Med10"/>
</dbReference>
<dbReference type="PANTHER" id="PTHR13345">
    <property type="entry name" value="MEDIATOR OF RNA POLYMERASE II TRANSCRIPTION SUBUNIT 10"/>
    <property type="match status" value="1"/>
</dbReference>
<dbReference type="PANTHER" id="PTHR13345:SF13">
    <property type="entry name" value="MEDIATOR OF RNA POLYMERASE II TRANSCRIPTION SUBUNIT 10"/>
    <property type="match status" value="1"/>
</dbReference>
<dbReference type="Pfam" id="PF09748">
    <property type="entry name" value="Med10"/>
    <property type="match status" value="1"/>
</dbReference>
<comment type="function">
    <text evidence="1 5 6 8">Component of the Mediator complex, a coactivator involved in the regulated transcription of nearly all RNA polymerase II-dependent genes. Mediator functions as a bridge to convey information from gene-specific regulatory proteins to the basal RNA polymerase II transcription machinery. The Mediator complex, having a compact conformation in its free form, is recruited to promoters by direct interactions with regulatory proteins and serves for the assembly of a functional preinitiation complex with RNA polymerase II and the general transcription factors. The Mediator complex unfolds to an extended conformation and partially surrounds RNA polymerase II, specifically interacting with the unphosphorylated form of the C-terminal domain (CTD) of RNA polymerase II. The Mediator complex dissociates from the RNA polymerase II holoenzyme and stays at the promoter when transcriptional elongation begins.</text>
</comment>
<comment type="subunit">
    <text evidence="1 4 7">Component of the Mediator complex, which is composed of at least 21 subunits that form three structurally distinct submodules. The Mediator head module contains MED6, MED8, MED11, SRB4/MED17, SRB5/MED18, ROX3/MED19, SRB2/MED20 and SRB6/MED22, the middle module contains MED1, MED4, NUT1/MED5, MED7, CSE2/MED9, NUT2/MED10, SRB7/MED21 and SOH1/MED31, and the tail module contains MED2, PGD1/MED3, RGR1/MED14, GAL11/MED15 and SIN4/MED16. The head and the middle modules interact directly with RNA polymerase II, whereas the elongated tail module interacts with gene-specific regulatory proteins. NUT2/MED10 interacts directly with SRB7/MED21.</text>
</comment>
<comment type="interaction">
    <interactant intactId="EBI-12414">
        <id>Q06213</id>
    </interactant>
    <interactant intactId="EBI-31503">
        <id>Q12343</id>
        <label>MED4</label>
    </interactant>
    <organismsDiffer>false</organismsDiffer>
    <experiments>3</experiments>
</comment>
<comment type="interaction">
    <interactant intactId="EBI-12414">
        <id>Q06213</id>
    </interactant>
    <interactant intactId="EBI-10674">
        <id>Q08278</id>
        <label>MED7</label>
    </interactant>
    <organismsDiffer>false</organismsDiffer>
    <experiments>7</experiments>
</comment>
<comment type="interaction">
    <interactant intactId="EBI-12414">
        <id>Q06213</id>
    </interactant>
    <interactant intactId="EBI-15087">
        <id>P19263</id>
        <label>RGR1</label>
    </interactant>
    <organismsDiffer>false</organismsDiffer>
    <experiments>4</experiments>
</comment>
<comment type="interaction">
    <interactant intactId="EBI-12414">
        <id>Q06213</id>
    </interactant>
    <interactant intactId="EBI-17658">
        <id>P38633</id>
        <label>SOH1</label>
    </interactant>
    <organismsDiffer>false</organismsDiffer>
    <experiments>4</experiments>
</comment>
<comment type="interaction">
    <interactant intactId="EBI-12414">
        <id>Q06213</id>
    </interactant>
    <interactant intactId="EBI-18046">
        <id>P47822</id>
        <label>SRB7</label>
    </interactant>
    <organismsDiffer>false</organismsDiffer>
    <experiments>3</experiments>
</comment>
<comment type="subcellular location">
    <subcellularLocation>
        <location evidence="2">Nucleus</location>
    </subcellularLocation>
</comment>
<comment type="miscellaneous">
    <text evidence="3">Present with 1472 molecules/cell in log phase SD medium.</text>
</comment>
<comment type="similarity">
    <text evidence="9">Belongs to the Mediator complex subunit 10 family.</text>
</comment>
<accession>Q06213</accession>
<accession>D6W4G9</accession>
<protein>
    <recommendedName>
        <fullName>Mediator of RNA polymerase II transcription subunit 10</fullName>
    </recommendedName>
    <alternativeName>
        <fullName>Mediator complex subunit 10</fullName>
    </alternativeName>
    <alternativeName>
        <fullName>Negative regulator of URS2 protein 2</fullName>
    </alternativeName>
</protein>
<feature type="chain" id="PRO_0000096357" description="Mediator of RNA polymerase II transcription subunit 10">
    <location>
        <begin position="1"/>
        <end position="157"/>
    </location>
</feature>
<keyword id="KW-0002">3D-structure</keyword>
<keyword id="KW-0010">Activator</keyword>
<keyword id="KW-0539">Nucleus</keyword>
<keyword id="KW-1185">Reference proteome</keyword>
<keyword id="KW-0804">Transcription</keyword>
<keyword id="KW-0805">Transcription regulation</keyword>
<name>MED10_YEAST</name>
<proteinExistence type="evidence at protein level"/>
<gene>
    <name type="primary">NUT2</name>
    <name type="synonym">MED10</name>
    <name type="ordered locus">YPR168W</name>
    <name type="ORF">P9325.2</name>
</gene>
<organism>
    <name type="scientific">Saccharomyces cerevisiae (strain ATCC 204508 / S288c)</name>
    <name type="common">Baker's yeast</name>
    <dbReference type="NCBI Taxonomy" id="559292"/>
    <lineage>
        <taxon>Eukaryota</taxon>
        <taxon>Fungi</taxon>
        <taxon>Dikarya</taxon>
        <taxon>Ascomycota</taxon>
        <taxon>Saccharomycotina</taxon>
        <taxon>Saccharomycetes</taxon>
        <taxon>Saccharomycetales</taxon>
        <taxon>Saccharomycetaceae</taxon>
        <taxon>Saccharomyces</taxon>
    </lineage>
</organism>
<evidence type="ECO:0000269" key="1">
    <source>
    </source>
</evidence>
<evidence type="ECO:0000269" key="2">
    <source>
    </source>
</evidence>
<evidence type="ECO:0000269" key="3">
    <source>
    </source>
</evidence>
<evidence type="ECO:0000269" key="4">
    <source>
    </source>
</evidence>
<evidence type="ECO:0000269" key="5">
    <source>
    </source>
</evidence>
<evidence type="ECO:0000269" key="6">
    <source>
    </source>
</evidence>
<evidence type="ECO:0000269" key="7">
    <source>
    </source>
</evidence>
<evidence type="ECO:0000269" key="8">
    <source>
    </source>
</evidence>
<evidence type="ECO:0000305" key="9"/>
<reference key="1">
    <citation type="journal article" date="1997" name="Nature">
        <title>The nucleotide sequence of Saccharomyces cerevisiae chromosome XVI.</title>
        <authorList>
            <person name="Bussey H."/>
            <person name="Storms R.K."/>
            <person name="Ahmed A."/>
            <person name="Albermann K."/>
            <person name="Allen E."/>
            <person name="Ansorge W."/>
            <person name="Araujo R."/>
            <person name="Aparicio A."/>
            <person name="Barrell B.G."/>
            <person name="Badcock K."/>
            <person name="Benes V."/>
            <person name="Botstein D."/>
            <person name="Bowman S."/>
            <person name="Brueckner M."/>
            <person name="Carpenter J."/>
            <person name="Cherry J.M."/>
            <person name="Chung E."/>
            <person name="Churcher C.M."/>
            <person name="Coster F."/>
            <person name="Davis K."/>
            <person name="Davis R.W."/>
            <person name="Dietrich F.S."/>
            <person name="Delius H."/>
            <person name="DiPaolo T."/>
            <person name="Dubois E."/>
            <person name="Duesterhoeft A."/>
            <person name="Duncan M."/>
            <person name="Floeth M."/>
            <person name="Fortin N."/>
            <person name="Friesen J.D."/>
            <person name="Fritz C."/>
            <person name="Goffeau A."/>
            <person name="Hall J."/>
            <person name="Hebling U."/>
            <person name="Heumann K."/>
            <person name="Hilbert H."/>
            <person name="Hillier L.W."/>
            <person name="Hunicke-Smith S."/>
            <person name="Hyman R.W."/>
            <person name="Johnston M."/>
            <person name="Kalman S."/>
            <person name="Kleine K."/>
            <person name="Komp C."/>
            <person name="Kurdi O."/>
            <person name="Lashkari D."/>
            <person name="Lew H."/>
            <person name="Lin A."/>
            <person name="Lin D."/>
            <person name="Louis E.J."/>
            <person name="Marathe R."/>
            <person name="Messenguy F."/>
            <person name="Mewes H.-W."/>
            <person name="Mirtipati S."/>
            <person name="Moestl D."/>
            <person name="Mueller-Auer S."/>
            <person name="Namath A."/>
            <person name="Nentwich U."/>
            <person name="Oefner P."/>
            <person name="Pearson D."/>
            <person name="Petel F.X."/>
            <person name="Pohl T.M."/>
            <person name="Purnelle B."/>
            <person name="Rajandream M.A."/>
            <person name="Rechmann S."/>
            <person name="Rieger M."/>
            <person name="Riles L."/>
            <person name="Roberts D."/>
            <person name="Schaefer M."/>
            <person name="Scharfe M."/>
            <person name="Scherens B."/>
            <person name="Schramm S."/>
            <person name="Schroeder M."/>
            <person name="Sdicu A.-M."/>
            <person name="Tettelin H."/>
            <person name="Urrestarazu L.A."/>
            <person name="Ushinsky S."/>
            <person name="Vierendeels F."/>
            <person name="Vissers S."/>
            <person name="Voss H."/>
            <person name="Walsh S.V."/>
            <person name="Wambutt R."/>
            <person name="Wang Y."/>
            <person name="Wedler E."/>
            <person name="Wedler H."/>
            <person name="Winnett E."/>
            <person name="Zhong W.-W."/>
            <person name="Zollner A."/>
            <person name="Vo D.H."/>
            <person name="Hani J."/>
        </authorList>
    </citation>
    <scope>NUCLEOTIDE SEQUENCE [LARGE SCALE GENOMIC DNA]</scope>
    <source>
        <strain>ATCC 204508 / S288c</strain>
    </source>
</reference>
<reference key="2">
    <citation type="journal article" date="2014" name="G3 (Bethesda)">
        <title>The reference genome sequence of Saccharomyces cerevisiae: Then and now.</title>
        <authorList>
            <person name="Engel S.R."/>
            <person name="Dietrich F.S."/>
            <person name="Fisk D.G."/>
            <person name="Binkley G."/>
            <person name="Balakrishnan R."/>
            <person name="Costanzo M.C."/>
            <person name="Dwight S.S."/>
            <person name="Hitz B.C."/>
            <person name="Karra K."/>
            <person name="Nash R.S."/>
            <person name="Weng S."/>
            <person name="Wong E.D."/>
            <person name="Lloyd P."/>
            <person name="Skrzypek M.S."/>
            <person name="Miyasato S.R."/>
            <person name="Simison M."/>
            <person name="Cherry J.M."/>
        </authorList>
    </citation>
    <scope>GENOME REANNOTATION</scope>
    <source>
        <strain>ATCC 204508 / S288c</strain>
    </source>
</reference>
<reference key="3">
    <citation type="journal article" date="1998" name="Mol. Cell. Biol.">
        <title>Nuclear proteins Nut1p and Nut2p cooperate to negatively regulate a Swi4p-dependent lacZ reporter gene in Saccharomyces cerevisiae.</title>
        <authorList>
            <person name="Tabtiang R.K."/>
            <person name="Herskowitz I."/>
        </authorList>
    </citation>
    <scope>FUNCTION</scope>
</reference>
<reference key="4">
    <citation type="journal article" date="1998" name="J. Biol. Chem.">
        <title>Identification of new mediator subunits in the RNA polymerase II holoenzyme from Saccharomyces cerevisiae.</title>
        <authorList>
            <person name="Gustafsson C.M."/>
            <person name="Myers L.C."/>
            <person name="Beve J."/>
            <person name="Spaahr H."/>
            <person name="Lui M."/>
            <person name="Erdjument-Bromage H."/>
            <person name="Tempst P."/>
            <person name="Kornberg R.D."/>
        </authorList>
    </citation>
    <scope>COMPONENT OF MEDIATOR COMPLEX</scope>
</reference>
<reference key="5">
    <citation type="journal article" date="2001" name="J. Biol. Chem.">
        <title>The structural and functional organization of the yeast mediator complex.</title>
        <authorList>
            <person name="Kang J.S."/>
            <person name="Kim S.H."/>
            <person name="Hwang M.S."/>
            <person name="Han S.J."/>
            <person name="Lee Y.C."/>
            <person name="Kim Y.-J."/>
        </authorList>
    </citation>
    <scope>INTERACTION WITH SRB7</scope>
    <scope>FUNCTION OF THE MEDIATOR COMPLEX</scope>
    <scope>INTERACTION OF THE MEDIATOR COMPLEX WITH RNA POLYMERASE II</scope>
</reference>
<reference key="6">
    <citation type="journal article" date="2003" name="Nature">
        <title>Global analysis of protein localization in budding yeast.</title>
        <authorList>
            <person name="Huh W.-K."/>
            <person name="Falvo J.V."/>
            <person name="Gerke L.C."/>
            <person name="Carroll A.S."/>
            <person name="Howson R.W."/>
            <person name="Weissman J.S."/>
            <person name="O'Shea E.K."/>
        </authorList>
    </citation>
    <scope>SUBCELLULAR LOCATION [LARGE SCALE ANALYSIS]</scope>
</reference>
<reference key="7">
    <citation type="journal article" date="2003" name="Nature">
        <title>Global analysis of protein expression in yeast.</title>
        <authorList>
            <person name="Ghaemmaghami S."/>
            <person name="Huh W.-K."/>
            <person name="Bower K."/>
            <person name="Howson R.W."/>
            <person name="Belle A."/>
            <person name="Dephoure N."/>
            <person name="O'Shea E.K."/>
            <person name="Weissman J.S."/>
        </authorList>
    </citation>
    <scope>LEVEL OF PROTEIN EXPRESSION [LARGE SCALE ANALYSIS]</scope>
</reference>
<reference key="8">
    <citation type="journal article" date="2004" name="Mol. Cell">
        <title>A unified nomenclature for protein subunits of mediator complexes linking transcriptional regulators to RNA polymerase II.</title>
        <authorList>
            <person name="Bourbon H.-M."/>
            <person name="Aguilera A."/>
            <person name="Ansari A.Z."/>
            <person name="Asturias F.J."/>
            <person name="Berk A.J."/>
            <person name="Bjoerklund S."/>
            <person name="Blackwell T.K."/>
            <person name="Borggrefe T."/>
            <person name="Carey M."/>
            <person name="Carlson M."/>
            <person name="Conaway J.W."/>
            <person name="Conaway R.C."/>
            <person name="Emmons S.W."/>
            <person name="Fondell J.D."/>
            <person name="Freedman L.P."/>
            <person name="Fukasawa T."/>
            <person name="Gustafsson C.M."/>
            <person name="Han M."/>
            <person name="He X."/>
            <person name="Herman P.K."/>
            <person name="Hinnebusch A.G."/>
            <person name="Holmberg S."/>
            <person name="Holstege F.C.P."/>
            <person name="Jaehning J.A."/>
            <person name="Kim Y.-J."/>
            <person name="Kuras L."/>
            <person name="Leutz A."/>
            <person name="Lis J.T."/>
            <person name="Meisterernest M."/>
            <person name="Naeaer A.M."/>
            <person name="Nasmyth K."/>
            <person name="Parvin J.D."/>
            <person name="Ptashne M."/>
            <person name="Reinberg D."/>
            <person name="Ronne H."/>
            <person name="Sadowski I."/>
            <person name="Sakurai H."/>
            <person name="Sipiczki M."/>
            <person name="Sternberg P.W."/>
            <person name="Stillman D.J."/>
            <person name="Strich R."/>
            <person name="Struhl K."/>
            <person name="Svejstrup J.Q."/>
            <person name="Tuck S."/>
            <person name="Winston F."/>
            <person name="Roeder R.G."/>
            <person name="Kornberg R.D."/>
        </authorList>
    </citation>
    <scope>NOMENCLATURE</scope>
</reference>
<reference key="9">
    <citation type="journal article" date="2004" name="Nucleic Acids Res.">
        <title>A high resolution protein interaction map of the yeast Mediator complex.</title>
        <authorList>
            <person name="Guglielmi B."/>
            <person name="van Berkum N.L."/>
            <person name="Klapholz B."/>
            <person name="Bijma T."/>
            <person name="Boube M."/>
            <person name="Boschiero C."/>
            <person name="Bourbon H.-M."/>
            <person name="Holstege F.C.P."/>
            <person name="Werner M."/>
        </authorList>
    </citation>
    <scope>TOPOLOGY OF THE MEDIATOR COMPLEX</scope>
</reference>
<reference key="10">
    <citation type="journal article" date="2005" name="J. Biol. Chem.">
        <title>A conserved mediator hinge revealed in the structure of the MED7-MED21 (Med7-Srb7) heterodimer.</title>
        <authorList>
            <person name="Baumli S."/>
            <person name="Hoeppner S."/>
            <person name="Cramer P."/>
        </authorList>
    </citation>
    <scope>INTERACTION WITH SRB7</scope>
</reference>
<reference key="11">
    <citation type="journal article" date="2005" name="J. Biol. Chem.">
        <title>Preponderance of free mediator in the yeast Saccharomyces cerevisiae.</title>
        <authorList>
            <person name="Takagi Y."/>
            <person name="Chadick J.Z."/>
            <person name="Davis J.A."/>
            <person name="Asturias F.J."/>
        </authorList>
    </citation>
    <scope>CHARACTERIZATION OF THE MEDIATOR COMPLEX</scope>
</reference>
<reference key="12">
    <citation type="journal article" date="2005" name="J. Biol. Chem.">
        <title>Mediator and TFIIH govern carboxyl-terminal domain-dependent transcription in yeast extracts.</title>
        <authorList>
            <person name="Nair D."/>
            <person name="Kim Y."/>
            <person name="Myers L.C."/>
        </authorList>
    </citation>
    <scope>FUNCTION OF THE MEDIATOR COMPLEX</scope>
</reference>
<reference key="13">
    <citation type="journal article" date="2006" name="J. Biol. Chem.">
        <title>Mediator as a general transcription factor.</title>
        <authorList>
            <person name="Takagi Y."/>
            <person name="Kornberg R.D."/>
        </authorList>
    </citation>
    <scope>FUNCTION OF THE MEDIATOR COMPLEX</scope>
</reference>
<reference key="14">
    <citation type="journal article" date="2007" name="J. Biol. Chem.">
        <title>Med19(Rox3) regulates intermodule interactions in the Saccharomyces cerevisiae mediator complex.</title>
        <authorList>
            <person name="Baidoobonso S.M."/>
            <person name="Guidi B.W."/>
            <person name="Myers L.C."/>
        </authorList>
    </citation>
    <scope>CHARACTERIZATION OF THE MEDIATOR COMPLEX</scope>
    <scope>INTERACTION OF THE MEDIATOR COMPLEX WITH RNA POLYMERASE II</scope>
</reference>
<reference key="15">
    <citation type="journal article" date="2002" name="Mol. Cell">
        <title>Structure of the yeast RNA polymerase II holoenzyme: mediator conformation and polymerase interaction.</title>
        <authorList>
            <person name="Davis J.A."/>
            <person name="Takagi Y."/>
            <person name="Kornberg R.D."/>
            <person name="Asturias F.J."/>
        </authorList>
    </citation>
    <scope>ELECTRON MICROSCOPY OF MEDIATOR COMPLEX IN COMPLEX WITH RNA POLYMERASE II</scope>
</reference>
<sequence length="157" mass="17908">MNGNSTNNEQLQQELATTQDQVASIIESFVELGVSIYDFPGTPEATKGMITNLQRNVDRLYKLNVRSNDPQSSLSKVDIPLEVVQYIEDGRNPDIYTREFVEAIRRSNQYQRGKMHGLKQLRDSLADKIVDEFPELKEPVEDIIKRTSPIDNVSNTH</sequence>